<keyword id="KW-0963">Cytoplasm</keyword>
<keyword id="KW-0648">Protein biosynthesis</keyword>
<feature type="chain" id="PRO_1000090707" description="Ribosome-recycling factor">
    <location>
        <begin position="1"/>
        <end position="185"/>
    </location>
</feature>
<name>RRF_BACMK</name>
<evidence type="ECO:0000255" key="1">
    <source>
        <dbReference type="HAMAP-Rule" id="MF_00040"/>
    </source>
</evidence>
<gene>
    <name evidence="1" type="primary">frr</name>
    <name type="ordered locus">BcerKBAB4_3647</name>
</gene>
<dbReference type="EMBL" id="CP000903">
    <property type="protein sequence ID" value="ABY44818.1"/>
    <property type="molecule type" value="Genomic_DNA"/>
</dbReference>
<dbReference type="RefSeq" id="WP_000531506.1">
    <property type="nucleotide sequence ID" value="NZ_CAKMRX030000111.1"/>
</dbReference>
<dbReference type="SMR" id="A9VT62"/>
<dbReference type="GeneID" id="66266612"/>
<dbReference type="KEGG" id="bwe:BcerKBAB4_3647"/>
<dbReference type="eggNOG" id="COG0233">
    <property type="taxonomic scope" value="Bacteria"/>
</dbReference>
<dbReference type="HOGENOM" id="CLU_073981_2_0_9"/>
<dbReference type="Proteomes" id="UP000002154">
    <property type="component" value="Chromosome"/>
</dbReference>
<dbReference type="GO" id="GO:0005737">
    <property type="term" value="C:cytoplasm"/>
    <property type="evidence" value="ECO:0007669"/>
    <property type="project" value="UniProtKB-SubCell"/>
</dbReference>
<dbReference type="GO" id="GO:0043023">
    <property type="term" value="F:ribosomal large subunit binding"/>
    <property type="evidence" value="ECO:0007669"/>
    <property type="project" value="TreeGrafter"/>
</dbReference>
<dbReference type="GO" id="GO:0006415">
    <property type="term" value="P:translational termination"/>
    <property type="evidence" value="ECO:0007669"/>
    <property type="project" value="UniProtKB-UniRule"/>
</dbReference>
<dbReference type="CDD" id="cd00520">
    <property type="entry name" value="RRF"/>
    <property type="match status" value="1"/>
</dbReference>
<dbReference type="FunFam" id="1.10.132.20:FF:000001">
    <property type="entry name" value="Ribosome-recycling factor"/>
    <property type="match status" value="1"/>
</dbReference>
<dbReference type="FunFam" id="3.30.1360.40:FF:000001">
    <property type="entry name" value="Ribosome-recycling factor"/>
    <property type="match status" value="1"/>
</dbReference>
<dbReference type="Gene3D" id="3.30.1360.40">
    <property type="match status" value="1"/>
</dbReference>
<dbReference type="Gene3D" id="1.10.132.20">
    <property type="entry name" value="Ribosome-recycling factor"/>
    <property type="match status" value="1"/>
</dbReference>
<dbReference type="HAMAP" id="MF_00040">
    <property type="entry name" value="RRF"/>
    <property type="match status" value="1"/>
</dbReference>
<dbReference type="InterPro" id="IPR002661">
    <property type="entry name" value="Ribosome_recyc_fac"/>
</dbReference>
<dbReference type="InterPro" id="IPR023584">
    <property type="entry name" value="Ribosome_recyc_fac_dom"/>
</dbReference>
<dbReference type="InterPro" id="IPR036191">
    <property type="entry name" value="RRF_sf"/>
</dbReference>
<dbReference type="NCBIfam" id="TIGR00496">
    <property type="entry name" value="frr"/>
    <property type="match status" value="1"/>
</dbReference>
<dbReference type="PANTHER" id="PTHR20982:SF3">
    <property type="entry name" value="MITOCHONDRIAL RIBOSOME RECYCLING FACTOR PSEUDO 1"/>
    <property type="match status" value="1"/>
</dbReference>
<dbReference type="PANTHER" id="PTHR20982">
    <property type="entry name" value="RIBOSOME RECYCLING FACTOR"/>
    <property type="match status" value="1"/>
</dbReference>
<dbReference type="Pfam" id="PF01765">
    <property type="entry name" value="RRF"/>
    <property type="match status" value="1"/>
</dbReference>
<dbReference type="SUPFAM" id="SSF55194">
    <property type="entry name" value="Ribosome recycling factor, RRF"/>
    <property type="match status" value="1"/>
</dbReference>
<accession>A9VT62</accession>
<reference key="1">
    <citation type="journal article" date="2008" name="Chem. Biol. Interact.">
        <title>Extending the Bacillus cereus group genomics to putative food-borne pathogens of different toxicity.</title>
        <authorList>
            <person name="Lapidus A."/>
            <person name="Goltsman E."/>
            <person name="Auger S."/>
            <person name="Galleron N."/>
            <person name="Segurens B."/>
            <person name="Dossat C."/>
            <person name="Land M.L."/>
            <person name="Broussolle V."/>
            <person name="Brillard J."/>
            <person name="Guinebretiere M.-H."/>
            <person name="Sanchis V."/>
            <person name="Nguen-the C."/>
            <person name="Lereclus D."/>
            <person name="Richardson P."/>
            <person name="Wincker P."/>
            <person name="Weissenbach J."/>
            <person name="Ehrlich S.D."/>
            <person name="Sorokin A."/>
        </authorList>
    </citation>
    <scope>NUCLEOTIDE SEQUENCE [LARGE SCALE GENOMIC DNA]</scope>
    <source>
        <strain>KBAB4</strain>
    </source>
</reference>
<organism>
    <name type="scientific">Bacillus mycoides (strain KBAB4)</name>
    <name type="common">Bacillus weihenstephanensis</name>
    <dbReference type="NCBI Taxonomy" id="315730"/>
    <lineage>
        <taxon>Bacteria</taxon>
        <taxon>Bacillati</taxon>
        <taxon>Bacillota</taxon>
        <taxon>Bacilli</taxon>
        <taxon>Bacillales</taxon>
        <taxon>Bacillaceae</taxon>
        <taxon>Bacillus</taxon>
        <taxon>Bacillus cereus group</taxon>
    </lineage>
</organism>
<comment type="function">
    <text evidence="1">Responsible for the release of ribosomes from messenger RNA at the termination of protein biosynthesis. May increase the efficiency of translation by recycling ribosomes from one round of translation to another.</text>
</comment>
<comment type="subcellular location">
    <subcellularLocation>
        <location evidence="1">Cytoplasm</location>
    </subcellularLocation>
</comment>
<comment type="similarity">
    <text evidence="1">Belongs to the RRF family.</text>
</comment>
<protein>
    <recommendedName>
        <fullName evidence="1">Ribosome-recycling factor</fullName>
        <shortName evidence="1">RRF</shortName>
    </recommendedName>
    <alternativeName>
        <fullName evidence="1">Ribosome-releasing factor</fullName>
    </alternativeName>
</protein>
<sequence length="185" mass="20652">MGQQVLKSSNEKMEKAVAAYSRELATVRAGRASSSVLDKVQVDYYGAPTPVVQLANITVPEARLLVIQPYDKTSIGDIEKAILKADLGLNPSNDGTVIRIAFPALTEERRRDLVKVVKKYAEEAKVAVRNVRRDSNDDLKKLEKAGDITEDDLRGYTEDIQKETDKYIAKVDEIAKNKEKEIMEV</sequence>
<proteinExistence type="inferred from homology"/>